<proteinExistence type="inferred from homology"/>
<comment type="cofactor">
    <cofactor evidence="1">
        <name>Mg(2+)</name>
        <dbReference type="ChEBI" id="CHEBI:18420"/>
    </cofactor>
    <text evidence="1">Binds 2 magnesium ions per subunit. They probably participate in the reaction catalyzed by the enzyme. May bind an additional third magnesium ion after substrate binding.</text>
</comment>
<comment type="similarity">
    <text evidence="2">Belongs to the XPG/RAD2 endonuclease family. FEN1 subfamily.</text>
</comment>
<accession>Q09708</accession>
<accession>Q9UTN5</accession>
<reference key="1">
    <citation type="journal article" date="2002" name="Nature">
        <title>The genome sequence of Schizosaccharomyces pombe.</title>
        <authorList>
            <person name="Wood V."/>
            <person name="Gwilliam R."/>
            <person name="Rajandream M.A."/>
            <person name="Lyne M.H."/>
            <person name="Lyne R."/>
            <person name="Stewart A."/>
            <person name="Sgouros J.G."/>
            <person name="Peat N."/>
            <person name="Hayles J."/>
            <person name="Baker S.G."/>
            <person name="Basham D."/>
            <person name="Bowman S."/>
            <person name="Brooks K."/>
            <person name="Brown D."/>
            <person name="Brown S."/>
            <person name="Chillingworth T."/>
            <person name="Churcher C.M."/>
            <person name="Collins M."/>
            <person name="Connor R."/>
            <person name="Cronin A."/>
            <person name="Davis P."/>
            <person name="Feltwell T."/>
            <person name="Fraser A."/>
            <person name="Gentles S."/>
            <person name="Goble A."/>
            <person name="Hamlin N."/>
            <person name="Harris D.E."/>
            <person name="Hidalgo J."/>
            <person name="Hodgson G."/>
            <person name="Holroyd S."/>
            <person name="Hornsby T."/>
            <person name="Howarth S."/>
            <person name="Huckle E.J."/>
            <person name="Hunt S."/>
            <person name="Jagels K."/>
            <person name="James K.D."/>
            <person name="Jones L."/>
            <person name="Jones M."/>
            <person name="Leather S."/>
            <person name="McDonald S."/>
            <person name="McLean J."/>
            <person name="Mooney P."/>
            <person name="Moule S."/>
            <person name="Mungall K.L."/>
            <person name="Murphy L.D."/>
            <person name="Niblett D."/>
            <person name="Odell C."/>
            <person name="Oliver K."/>
            <person name="O'Neil S."/>
            <person name="Pearson D."/>
            <person name="Quail M.A."/>
            <person name="Rabbinowitsch E."/>
            <person name="Rutherford K.M."/>
            <person name="Rutter S."/>
            <person name="Saunders D."/>
            <person name="Seeger K."/>
            <person name="Sharp S."/>
            <person name="Skelton J."/>
            <person name="Simmonds M.N."/>
            <person name="Squares R."/>
            <person name="Squares S."/>
            <person name="Stevens K."/>
            <person name="Taylor K."/>
            <person name="Taylor R.G."/>
            <person name="Tivey A."/>
            <person name="Walsh S.V."/>
            <person name="Warren T."/>
            <person name="Whitehead S."/>
            <person name="Woodward J.R."/>
            <person name="Volckaert G."/>
            <person name="Aert R."/>
            <person name="Robben J."/>
            <person name="Grymonprez B."/>
            <person name="Weltjens I."/>
            <person name="Vanstreels E."/>
            <person name="Rieger M."/>
            <person name="Schaefer M."/>
            <person name="Mueller-Auer S."/>
            <person name="Gabel C."/>
            <person name="Fuchs M."/>
            <person name="Duesterhoeft A."/>
            <person name="Fritzc C."/>
            <person name="Holzer E."/>
            <person name="Moestl D."/>
            <person name="Hilbert H."/>
            <person name="Borzym K."/>
            <person name="Langer I."/>
            <person name="Beck A."/>
            <person name="Lehrach H."/>
            <person name="Reinhardt R."/>
            <person name="Pohl T.M."/>
            <person name="Eger P."/>
            <person name="Zimmermann W."/>
            <person name="Wedler H."/>
            <person name="Wambutt R."/>
            <person name="Purnelle B."/>
            <person name="Goffeau A."/>
            <person name="Cadieu E."/>
            <person name="Dreano S."/>
            <person name="Gloux S."/>
            <person name="Lelaure V."/>
            <person name="Mottier S."/>
            <person name="Galibert F."/>
            <person name="Aves S.J."/>
            <person name="Xiang Z."/>
            <person name="Hunt C."/>
            <person name="Moore K."/>
            <person name="Hurst S.M."/>
            <person name="Lucas M."/>
            <person name="Rochet M."/>
            <person name="Gaillardin C."/>
            <person name="Tallada V.A."/>
            <person name="Garzon A."/>
            <person name="Thode G."/>
            <person name="Daga R.R."/>
            <person name="Cruzado L."/>
            <person name="Jimenez J."/>
            <person name="Sanchez M."/>
            <person name="del Rey F."/>
            <person name="Benito J."/>
            <person name="Dominguez A."/>
            <person name="Revuelta J.L."/>
            <person name="Moreno S."/>
            <person name="Armstrong J."/>
            <person name="Forsburg S.L."/>
            <person name="Cerutti L."/>
            <person name="Lowe T."/>
            <person name="McCombie W.R."/>
            <person name="Paulsen I."/>
            <person name="Potashkin J."/>
            <person name="Shpakovski G.V."/>
            <person name="Ussery D."/>
            <person name="Barrell B.G."/>
            <person name="Nurse P."/>
        </authorList>
    </citation>
    <scope>NUCLEOTIDE SEQUENCE [LARGE SCALE GENOMIC DNA]</scope>
    <source>
        <strain>972 / ATCC 24843</strain>
    </source>
</reference>
<organism>
    <name type="scientific">Schizosaccharomyces pombe (strain 972 / ATCC 24843)</name>
    <name type="common">Fission yeast</name>
    <dbReference type="NCBI Taxonomy" id="284812"/>
    <lineage>
        <taxon>Eukaryota</taxon>
        <taxon>Fungi</taxon>
        <taxon>Dikarya</taxon>
        <taxon>Ascomycota</taxon>
        <taxon>Taphrinomycotina</taxon>
        <taxon>Schizosaccharomycetes</taxon>
        <taxon>Schizosaccharomycetales</taxon>
        <taxon>Schizosaccharomycetaceae</taxon>
        <taxon>Schizosaccharomyces</taxon>
    </lineage>
</organism>
<sequence>MGVHGLLPIIRKVASEGIRWLQPEFFSKYYPVLAVDGNLLLYRFFRSPNTPLHTNYQHVLWALKLSRYCRKLKTSPIVVFDNLKPNDFKAEEHEKRSLISSQIVNQRQVVQEQMYFLCNLKNCLIDNNFPTGNFYYEIGPLLSQIGKLLFDLRSLNERDNPFHAQNNAENLENATFVRLIVDKLNDREKTLMIQEKKNHLIHSLRQLLAFSEINDFPSEIRSYLEFILSNLDLECLTLCLKIIKGILTLDELQKAIKLKQTELDKLERRLYRPSPQNIFEIFEILKILGIPASFSPIGVEAEAFASAISQNNLAYAVATQDTDVLLLGSSMISNFLDLNDNFHLPLQIMDPRKIAQELNLTFDGFQDYCLMCGTDFTSRIPKIGPVRALKLIRYYGNAFDVLKALNVEEKYIIPTDYIKKFLTAKKLFTDLPSNNELFSFIHNIPKEFLHLSDSTYLDLEKQVLRIFNVQIEELDAKTPWYYHYELEKDVKSTYEY</sequence>
<gene>
    <name type="ORF">SPAC12G12.16c</name>
    <name type="ORF">SPAC18B11.01c</name>
</gene>
<feature type="chain" id="PRO_0000154047" description="Uncharacterized protein C12G12.16c">
    <location>
        <begin position="1"/>
        <end position="496"/>
    </location>
</feature>
<feature type="binding site" evidence="1">
    <location>
        <position position="36"/>
    </location>
    <ligand>
        <name>Mg(2+)</name>
        <dbReference type="ChEBI" id="CHEBI:18420"/>
        <label>1</label>
    </ligand>
</feature>
<feature type="binding site" evidence="1">
    <location>
        <position position="81"/>
    </location>
    <ligand>
        <name>Mg(2+)</name>
        <dbReference type="ChEBI" id="CHEBI:18420"/>
        <label>1</label>
    </ligand>
</feature>
<feature type="binding site" evidence="1">
    <location>
        <position position="300"/>
    </location>
    <ligand>
        <name>Mg(2+)</name>
        <dbReference type="ChEBI" id="CHEBI:18420"/>
        <label>1</label>
    </ligand>
</feature>
<feature type="binding site" evidence="1">
    <location>
        <position position="302"/>
    </location>
    <ligand>
        <name>Mg(2+)</name>
        <dbReference type="ChEBI" id="CHEBI:18420"/>
        <label>1</label>
    </ligand>
</feature>
<feature type="binding site" evidence="1">
    <location>
        <position position="321"/>
    </location>
    <ligand>
        <name>Mg(2+)</name>
        <dbReference type="ChEBI" id="CHEBI:18420"/>
        <label>2</label>
    </ligand>
</feature>
<feature type="binding site" evidence="1">
    <location>
        <position position="323"/>
    </location>
    <ligand>
        <name>Mg(2+)</name>
        <dbReference type="ChEBI" id="CHEBI:18420"/>
        <label>2</label>
    </ligand>
</feature>
<feature type="binding site" evidence="1">
    <location>
        <position position="375"/>
    </location>
    <ligand>
        <name>Mg(2+)</name>
        <dbReference type="ChEBI" id="CHEBI:18420"/>
        <label>2</label>
    </ligand>
</feature>
<keyword id="KW-0255">Endonuclease</keyword>
<keyword id="KW-0378">Hydrolase</keyword>
<keyword id="KW-0460">Magnesium</keyword>
<keyword id="KW-0479">Metal-binding</keyword>
<keyword id="KW-0540">Nuclease</keyword>
<keyword id="KW-1185">Reference proteome</keyword>
<dbReference type="EMBL" id="CU329670">
    <property type="protein sequence ID" value="CAA90586.1"/>
    <property type="molecule type" value="Genomic_DNA"/>
</dbReference>
<dbReference type="PIR" id="T37913">
    <property type="entry name" value="S58300"/>
</dbReference>
<dbReference type="RefSeq" id="NP_592882.1">
    <property type="nucleotide sequence ID" value="NM_001018282.2"/>
</dbReference>
<dbReference type="FunCoup" id="Q09708">
    <property type="interactions" value="199"/>
</dbReference>
<dbReference type="STRING" id="284812.Q09708"/>
<dbReference type="PaxDb" id="4896-SPAC12G12.16c.1"/>
<dbReference type="EnsemblFungi" id="SPAC12G12.16c.1">
    <property type="protein sequence ID" value="SPAC12G12.16c.1:pep"/>
    <property type="gene ID" value="SPAC12G12.16c"/>
</dbReference>
<dbReference type="KEGG" id="spo:2543216"/>
<dbReference type="PomBase" id="SPAC12G12.16c"/>
<dbReference type="VEuPathDB" id="FungiDB:SPAC12G12.16c"/>
<dbReference type="eggNOG" id="KOG2519">
    <property type="taxonomic scope" value="Eukaryota"/>
</dbReference>
<dbReference type="HOGENOM" id="CLU_644291_0_0_1"/>
<dbReference type="InParanoid" id="Q09708"/>
<dbReference type="OMA" id="CLMCGTD"/>
<dbReference type="PRO" id="PR:Q09708"/>
<dbReference type="Proteomes" id="UP000002485">
    <property type="component" value="Chromosome I"/>
</dbReference>
<dbReference type="GO" id="GO:0005737">
    <property type="term" value="C:cytoplasm"/>
    <property type="evidence" value="ECO:0007005"/>
    <property type="project" value="PomBase"/>
</dbReference>
<dbReference type="GO" id="GO:0005634">
    <property type="term" value="C:nucleus"/>
    <property type="evidence" value="ECO:0000318"/>
    <property type="project" value="GO_Central"/>
</dbReference>
<dbReference type="GO" id="GO:0035312">
    <property type="term" value="F:5'-3' DNA exonuclease activity"/>
    <property type="evidence" value="ECO:0000266"/>
    <property type="project" value="PomBase"/>
</dbReference>
<dbReference type="GO" id="GO:0008409">
    <property type="term" value="F:5'-3' exonuclease activity"/>
    <property type="evidence" value="ECO:0000318"/>
    <property type="project" value="GO_Central"/>
</dbReference>
<dbReference type="GO" id="GO:0017108">
    <property type="term" value="F:5'-flap endonuclease activity"/>
    <property type="evidence" value="ECO:0000318"/>
    <property type="project" value="GO_Central"/>
</dbReference>
<dbReference type="GO" id="GO:0003677">
    <property type="term" value="F:DNA binding"/>
    <property type="evidence" value="ECO:0007669"/>
    <property type="project" value="InterPro"/>
</dbReference>
<dbReference type="GO" id="GO:0046872">
    <property type="term" value="F:metal ion binding"/>
    <property type="evidence" value="ECO:0007669"/>
    <property type="project" value="UniProtKB-KW"/>
</dbReference>
<dbReference type="GO" id="GO:0000724">
    <property type="term" value="P:double-strand break repair via homologous recombination"/>
    <property type="evidence" value="ECO:0000266"/>
    <property type="project" value="PomBase"/>
</dbReference>
<dbReference type="CDD" id="cd09897">
    <property type="entry name" value="H3TH_FEN1-XPG-like"/>
    <property type="match status" value="1"/>
</dbReference>
<dbReference type="Gene3D" id="1.10.150.20">
    <property type="entry name" value="5' to 3' exonuclease, C-terminal subdomain"/>
    <property type="match status" value="1"/>
</dbReference>
<dbReference type="Gene3D" id="3.40.50.1010">
    <property type="entry name" value="5'-nuclease"/>
    <property type="match status" value="2"/>
</dbReference>
<dbReference type="InterPro" id="IPR036279">
    <property type="entry name" value="5-3_exonuclease_C_sf"/>
</dbReference>
<dbReference type="InterPro" id="IPR008918">
    <property type="entry name" value="HhH2"/>
</dbReference>
<dbReference type="InterPro" id="IPR029060">
    <property type="entry name" value="PIN-like_dom_sf"/>
</dbReference>
<dbReference type="InterPro" id="IPR006086">
    <property type="entry name" value="XPG-I_dom"/>
</dbReference>
<dbReference type="InterPro" id="IPR006084">
    <property type="entry name" value="XPG/Rad2"/>
</dbReference>
<dbReference type="InterPro" id="IPR006085">
    <property type="entry name" value="XPG_DNA_repair_N"/>
</dbReference>
<dbReference type="PANTHER" id="PTHR11081">
    <property type="entry name" value="FLAP ENDONUCLEASE FAMILY MEMBER"/>
    <property type="match status" value="1"/>
</dbReference>
<dbReference type="PANTHER" id="PTHR11081:SF69">
    <property type="entry name" value="XP-G FAMILY NUCLEASE"/>
    <property type="match status" value="1"/>
</dbReference>
<dbReference type="Pfam" id="PF00867">
    <property type="entry name" value="XPG_I"/>
    <property type="match status" value="1"/>
</dbReference>
<dbReference type="Pfam" id="PF00752">
    <property type="entry name" value="XPG_N"/>
    <property type="match status" value="1"/>
</dbReference>
<dbReference type="PRINTS" id="PR00853">
    <property type="entry name" value="XPGRADSUPER"/>
</dbReference>
<dbReference type="SMART" id="SM00279">
    <property type="entry name" value="HhH2"/>
    <property type="match status" value="1"/>
</dbReference>
<dbReference type="SMART" id="SM00484">
    <property type="entry name" value="XPGI"/>
    <property type="match status" value="1"/>
</dbReference>
<dbReference type="SMART" id="SM00485">
    <property type="entry name" value="XPGN"/>
    <property type="match status" value="1"/>
</dbReference>
<dbReference type="SUPFAM" id="SSF47807">
    <property type="entry name" value="5' to 3' exonuclease, C-terminal subdomain"/>
    <property type="match status" value="1"/>
</dbReference>
<dbReference type="SUPFAM" id="SSF88723">
    <property type="entry name" value="PIN domain-like"/>
    <property type="match status" value="1"/>
</dbReference>
<protein>
    <recommendedName>
        <fullName>Uncharacterized protein C12G12.16c</fullName>
    </recommendedName>
</protein>
<evidence type="ECO:0000250" key="1"/>
<evidence type="ECO:0000305" key="2"/>
<name>YAGG_SCHPO</name>